<accession>O82254</accession>
<accession>C1JGP6</accession>
<comment type="function">
    <text evidence="1">Has a glutathione-disulfide oxidoreductase activity in the presence of NADPH and glutathione reductase. Reduces low molecular weight disulfides and proteins (By similarity).</text>
</comment>
<comment type="subcellular location">
    <subcellularLocation>
        <location evidence="1">Cytoplasm</location>
    </subcellularLocation>
</comment>
<comment type="similarity">
    <text evidence="3">Belongs to the glutaredoxin family. CC-type subfamily.</text>
</comment>
<name>GRC12_ARATH</name>
<dbReference type="EMBL" id="FJ611905">
    <property type="protein sequence ID" value="ACO50410.1"/>
    <property type="molecule type" value="mRNA"/>
</dbReference>
<dbReference type="EMBL" id="AC005309">
    <property type="protein sequence ID" value="AAC63641.1"/>
    <property type="molecule type" value="Genomic_DNA"/>
</dbReference>
<dbReference type="EMBL" id="AC006072">
    <property type="protein sequence ID" value="AAM15125.1"/>
    <property type="molecule type" value="Genomic_DNA"/>
</dbReference>
<dbReference type="EMBL" id="CP002685">
    <property type="protein sequence ID" value="AEC10903.1"/>
    <property type="molecule type" value="Genomic_DNA"/>
</dbReference>
<dbReference type="PIR" id="E84920">
    <property type="entry name" value="E84920"/>
</dbReference>
<dbReference type="RefSeq" id="NP_001318444.1">
    <property type="nucleotide sequence ID" value="NM_001337281.1"/>
</dbReference>
<dbReference type="SMR" id="O82254"/>
<dbReference type="BioGRID" id="4734">
    <property type="interactions" value="1"/>
</dbReference>
<dbReference type="FunCoup" id="O82254">
    <property type="interactions" value="33"/>
</dbReference>
<dbReference type="STRING" id="3702.O82254"/>
<dbReference type="PaxDb" id="3702-AT2G47870.1"/>
<dbReference type="EnsemblPlants" id="AT2G47870.1">
    <property type="protein sequence ID" value="AT2G47870.1"/>
    <property type="gene ID" value="AT2G47870"/>
</dbReference>
<dbReference type="GeneID" id="28718362"/>
<dbReference type="Gramene" id="AT2G47870.1">
    <property type="protein sequence ID" value="AT2G47870.1"/>
    <property type="gene ID" value="AT2G47870"/>
</dbReference>
<dbReference type="KEGG" id="ath:AT2G47870"/>
<dbReference type="Araport" id="AT2G47870"/>
<dbReference type="TAIR" id="AT2G47870">
    <property type="gene designation" value="ROXY5"/>
</dbReference>
<dbReference type="eggNOG" id="KOG1752">
    <property type="taxonomic scope" value="Eukaryota"/>
</dbReference>
<dbReference type="HOGENOM" id="CLU_026126_6_0_1"/>
<dbReference type="InParanoid" id="O82254"/>
<dbReference type="OMA" id="PMCHTVL"/>
<dbReference type="OrthoDB" id="418495at2759"/>
<dbReference type="PhylomeDB" id="O82254"/>
<dbReference type="PRO" id="PR:O82254"/>
<dbReference type="Proteomes" id="UP000006548">
    <property type="component" value="Chromosome 2"/>
</dbReference>
<dbReference type="ExpressionAtlas" id="O82254">
    <property type="expression patterns" value="baseline and differential"/>
</dbReference>
<dbReference type="GO" id="GO:0005737">
    <property type="term" value="C:cytoplasm"/>
    <property type="evidence" value="ECO:0007669"/>
    <property type="project" value="UniProtKB-SubCell"/>
</dbReference>
<dbReference type="GO" id="GO:0000122">
    <property type="term" value="P:negative regulation of transcription by RNA polymerase II"/>
    <property type="evidence" value="ECO:0000314"/>
    <property type="project" value="TAIR"/>
</dbReference>
<dbReference type="CDD" id="cd03419">
    <property type="entry name" value="GRX_GRXh_1_2_like"/>
    <property type="match status" value="1"/>
</dbReference>
<dbReference type="FunFam" id="3.40.30.10:FF:000028">
    <property type="entry name" value="Glutaredoxin family protein"/>
    <property type="match status" value="1"/>
</dbReference>
<dbReference type="Gene3D" id="3.40.30.10">
    <property type="entry name" value="Glutaredoxin"/>
    <property type="match status" value="1"/>
</dbReference>
<dbReference type="InterPro" id="IPR011905">
    <property type="entry name" value="GlrX-like_pln_2"/>
</dbReference>
<dbReference type="InterPro" id="IPR002109">
    <property type="entry name" value="Glutaredoxin"/>
</dbReference>
<dbReference type="InterPro" id="IPR036249">
    <property type="entry name" value="Thioredoxin-like_sf"/>
</dbReference>
<dbReference type="NCBIfam" id="TIGR02189">
    <property type="entry name" value="GlrX-like_plant"/>
    <property type="match status" value="1"/>
</dbReference>
<dbReference type="PANTHER" id="PTHR10168">
    <property type="entry name" value="GLUTAREDOXIN"/>
    <property type="match status" value="1"/>
</dbReference>
<dbReference type="Pfam" id="PF00462">
    <property type="entry name" value="Glutaredoxin"/>
    <property type="match status" value="1"/>
</dbReference>
<dbReference type="SUPFAM" id="SSF52833">
    <property type="entry name" value="Thioredoxin-like"/>
    <property type="match status" value="1"/>
</dbReference>
<dbReference type="PROSITE" id="PS51354">
    <property type="entry name" value="GLUTAREDOXIN_2"/>
    <property type="match status" value="1"/>
</dbReference>
<reference key="1">
    <citation type="journal article" date="2009" name="Plant Cell">
        <title>Nuclear activity of ROXY1, a glutaredoxin interacting with TGA factors, is required for petal development in Arabidopsis thaliana.</title>
        <authorList>
            <person name="Li S."/>
            <person name="Lauri A."/>
            <person name="Ziemann M."/>
            <person name="Busch A."/>
            <person name="Bhave M."/>
            <person name="Zachgo S."/>
        </authorList>
    </citation>
    <scope>NUCLEOTIDE SEQUENCE [MRNA]</scope>
    <scope>GENE FAMILY</scope>
</reference>
<reference key="2">
    <citation type="journal article" date="1999" name="Nature">
        <title>Sequence and analysis of chromosome 2 of the plant Arabidopsis thaliana.</title>
        <authorList>
            <person name="Lin X."/>
            <person name="Kaul S."/>
            <person name="Rounsley S.D."/>
            <person name="Shea T.P."/>
            <person name="Benito M.-I."/>
            <person name="Town C.D."/>
            <person name="Fujii C.Y."/>
            <person name="Mason T.M."/>
            <person name="Bowman C.L."/>
            <person name="Barnstead M.E."/>
            <person name="Feldblyum T.V."/>
            <person name="Buell C.R."/>
            <person name="Ketchum K.A."/>
            <person name="Lee J.J."/>
            <person name="Ronning C.M."/>
            <person name="Koo H.L."/>
            <person name="Moffat K.S."/>
            <person name="Cronin L.A."/>
            <person name="Shen M."/>
            <person name="Pai G."/>
            <person name="Van Aken S."/>
            <person name="Umayam L."/>
            <person name="Tallon L.J."/>
            <person name="Gill J.E."/>
            <person name="Adams M.D."/>
            <person name="Carrera A.J."/>
            <person name="Creasy T.H."/>
            <person name="Goodman H.M."/>
            <person name="Somerville C.R."/>
            <person name="Copenhaver G.P."/>
            <person name="Preuss D."/>
            <person name="Nierman W.C."/>
            <person name="White O."/>
            <person name="Eisen J.A."/>
            <person name="Salzberg S.L."/>
            <person name="Fraser C.M."/>
            <person name="Venter J.C."/>
        </authorList>
    </citation>
    <scope>NUCLEOTIDE SEQUENCE [LARGE SCALE GENOMIC DNA]</scope>
    <source>
        <strain>cv. Columbia</strain>
    </source>
</reference>
<reference key="3">
    <citation type="journal article" date="2017" name="Plant J.">
        <title>Araport11: a complete reannotation of the Arabidopsis thaliana reference genome.</title>
        <authorList>
            <person name="Cheng C.Y."/>
            <person name="Krishnakumar V."/>
            <person name="Chan A.P."/>
            <person name="Thibaud-Nissen F."/>
            <person name="Schobel S."/>
            <person name="Town C.D."/>
        </authorList>
    </citation>
    <scope>GENOME REANNOTATION</scope>
    <source>
        <strain>cv. Columbia</strain>
    </source>
</reference>
<reference key="4">
    <citation type="journal article" date="2004" name="Cell. Mol. Life Sci.">
        <title>Plant glutaredoxins: still mysterious reducing systems.</title>
        <authorList>
            <person name="Rouhier N."/>
            <person name="Gelhaye E."/>
            <person name="Jacquot J.-P."/>
        </authorList>
    </citation>
    <scope>GENE FAMILY</scope>
    <scope>NOMENCLATURE</scope>
</reference>
<reference key="5">
    <citation type="journal article" date="2006" name="J. Exp. Bot.">
        <title>Genome-wide analysis of plant glutaredoxin systems.</title>
        <authorList>
            <person name="Rouhier N."/>
            <person name="Couturier J."/>
            <person name="Jacquot J.-P."/>
        </authorList>
    </citation>
    <scope>GENE FAMILY</scope>
</reference>
<feature type="chain" id="PRO_0000268719" description="Putative glutaredoxin-C12">
    <location>
        <begin position="1"/>
        <end position="103"/>
    </location>
</feature>
<feature type="domain" description="Glutaredoxin" evidence="2">
    <location>
        <begin position="1"/>
        <end position="102"/>
    </location>
</feature>
<feature type="disulfide bond" description="Redox-active" evidence="1">
    <location>
        <begin position="21"/>
        <end position="24"/>
    </location>
</feature>
<organism>
    <name type="scientific">Arabidopsis thaliana</name>
    <name type="common">Mouse-ear cress</name>
    <dbReference type="NCBI Taxonomy" id="3702"/>
    <lineage>
        <taxon>Eukaryota</taxon>
        <taxon>Viridiplantae</taxon>
        <taxon>Streptophyta</taxon>
        <taxon>Embryophyta</taxon>
        <taxon>Tracheophyta</taxon>
        <taxon>Spermatophyta</taxon>
        <taxon>Magnoliopsida</taxon>
        <taxon>eudicotyledons</taxon>
        <taxon>Gunneridae</taxon>
        <taxon>Pentapetalae</taxon>
        <taxon>rosids</taxon>
        <taxon>malvids</taxon>
        <taxon>Brassicales</taxon>
        <taxon>Brassicaceae</taxon>
        <taxon>Camelineae</taxon>
        <taxon>Arabidopsis</taxon>
    </lineage>
</organism>
<sequence>MERVRDLASEKAAVIFTKSSCCMCHSIKTLFYELGASPAIHELDKDPQGPDMERALFRVFGSNPAVPAVFVGGRYVGSAKDVISFHVDGSLKQMLKASNAIWL</sequence>
<keyword id="KW-0963">Cytoplasm</keyword>
<keyword id="KW-1015">Disulfide bond</keyword>
<keyword id="KW-0249">Electron transport</keyword>
<keyword id="KW-0676">Redox-active center</keyword>
<keyword id="KW-1185">Reference proteome</keyword>
<keyword id="KW-0813">Transport</keyword>
<gene>
    <name type="primary">GRXC12</name>
    <name type="synonym">ROXY5</name>
    <name type="ordered locus">At2g47870</name>
    <name type="ORF">F17A22.26</name>
    <name type="ORF">T9J23.11</name>
</gene>
<protein>
    <recommendedName>
        <fullName>Putative glutaredoxin-C12</fullName>
        <shortName>AtGrxC12</shortName>
    </recommendedName>
    <alternativeName>
        <fullName>Protein ROXY 5</fullName>
    </alternativeName>
</protein>
<evidence type="ECO:0000250" key="1"/>
<evidence type="ECO:0000255" key="2">
    <source>
        <dbReference type="PROSITE-ProRule" id="PRU00686"/>
    </source>
</evidence>
<evidence type="ECO:0000305" key="3"/>
<proteinExistence type="inferred from homology"/>